<keyword id="KW-0687">Ribonucleoprotein</keyword>
<keyword id="KW-0689">Ribosomal protein</keyword>
<keyword id="KW-0694">RNA-binding</keyword>
<keyword id="KW-0699">rRNA-binding</keyword>
<reference key="1">
    <citation type="journal article" date="2010" name="PLoS ONE">
        <title>The complete multipartite genome sequence of Cupriavidus necator JMP134, a versatile pollutant degrader.</title>
        <authorList>
            <person name="Lykidis A."/>
            <person name="Perez-Pantoja D."/>
            <person name="Ledger T."/>
            <person name="Mavromatis K."/>
            <person name="Anderson I.J."/>
            <person name="Ivanova N.N."/>
            <person name="Hooper S.D."/>
            <person name="Lapidus A."/>
            <person name="Lucas S."/>
            <person name="Gonzalez B."/>
            <person name="Kyrpides N.C."/>
        </authorList>
    </citation>
    <scope>NUCLEOTIDE SEQUENCE [LARGE SCALE GENOMIC DNA]</scope>
    <source>
        <strain>JMP134 / LMG 1197</strain>
    </source>
</reference>
<feature type="chain" id="PRO_0000237232" description="Large ribosomal subunit protein uL2">
    <location>
        <begin position="1"/>
        <end position="276"/>
    </location>
</feature>
<feature type="region of interest" description="Disordered" evidence="2">
    <location>
        <begin position="37"/>
        <end position="59"/>
    </location>
</feature>
<feature type="region of interest" description="Disordered" evidence="2">
    <location>
        <begin position="225"/>
        <end position="276"/>
    </location>
</feature>
<feature type="compositionally biased region" description="Polar residues" evidence="2">
    <location>
        <begin position="39"/>
        <end position="49"/>
    </location>
</feature>
<feature type="compositionally biased region" description="Basic residues" evidence="2">
    <location>
        <begin position="50"/>
        <end position="59"/>
    </location>
</feature>
<evidence type="ECO:0000255" key="1">
    <source>
        <dbReference type="HAMAP-Rule" id="MF_01320"/>
    </source>
</evidence>
<evidence type="ECO:0000256" key="2">
    <source>
        <dbReference type="SAM" id="MobiDB-lite"/>
    </source>
</evidence>
<evidence type="ECO:0000305" key="3"/>
<name>RL2_CUPPJ</name>
<sequence length="276" mass="30014">MALVKTKPTSPGRRSMVKVVNKDLHKGAPHAPLLEKQFQKSGRNNNGHITTRHKGGGHKHHYRVVDFKRNDKDGIAAKVERLEYDPNRSANIALVLFADGERRYIIATKGMVAGQALLNGAEAPIKAGNNLPIRNIPVGTTINNVEILPGKGAQVARAAGGSAVLLAREGLYAQVRLRSGEVRRVHIECRATIGEVGNEEHSLRVIGKAGATRWRGIRPTVRGVVMNPVDHPHGGGEGKTAAGRDPVSPWGTPAKGYRTRSNKRTDSMIVQKRHKR</sequence>
<gene>
    <name evidence="1" type="primary">rplB</name>
    <name type="ordered locus">Reut_A3176</name>
</gene>
<protein>
    <recommendedName>
        <fullName evidence="1">Large ribosomal subunit protein uL2</fullName>
    </recommendedName>
    <alternativeName>
        <fullName evidence="3">50S ribosomal protein L2</fullName>
    </alternativeName>
</protein>
<proteinExistence type="inferred from homology"/>
<accession>Q46WE7</accession>
<comment type="function">
    <text evidence="1">One of the primary rRNA binding proteins. Required for association of the 30S and 50S subunits to form the 70S ribosome, for tRNA binding and peptide bond formation. It has been suggested to have peptidyltransferase activity; this is somewhat controversial. Makes several contacts with the 16S rRNA in the 70S ribosome.</text>
</comment>
<comment type="subunit">
    <text evidence="1">Part of the 50S ribosomal subunit. Forms a bridge to the 30S subunit in the 70S ribosome.</text>
</comment>
<comment type="similarity">
    <text evidence="1">Belongs to the universal ribosomal protein uL2 family.</text>
</comment>
<organism>
    <name type="scientific">Cupriavidus pinatubonensis (strain JMP 134 / LMG 1197)</name>
    <name type="common">Cupriavidus necator (strain JMP 134)</name>
    <dbReference type="NCBI Taxonomy" id="264198"/>
    <lineage>
        <taxon>Bacteria</taxon>
        <taxon>Pseudomonadati</taxon>
        <taxon>Pseudomonadota</taxon>
        <taxon>Betaproteobacteria</taxon>
        <taxon>Burkholderiales</taxon>
        <taxon>Burkholderiaceae</taxon>
        <taxon>Cupriavidus</taxon>
    </lineage>
</organism>
<dbReference type="EMBL" id="CP000090">
    <property type="protein sequence ID" value="AAZ62536.1"/>
    <property type="molecule type" value="Genomic_DNA"/>
</dbReference>
<dbReference type="SMR" id="Q46WE7"/>
<dbReference type="STRING" id="264198.Reut_A3176"/>
<dbReference type="KEGG" id="reu:Reut_A3176"/>
<dbReference type="eggNOG" id="COG0090">
    <property type="taxonomic scope" value="Bacteria"/>
</dbReference>
<dbReference type="HOGENOM" id="CLU_036235_2_1_4"/>
<dbReference type="OrthoDB" id="9778722at2"/>
<dbReference type="GO" id="GO:0015934">
    <property type="term" value="C:large ribosomal subunit"/>
    <property type="evidence" value="ECO:0007669"/>
    <property type="project" value="InterPro"/>
</dbReference>
<dbReference type="GO" id="GO:0019843">
    <property type="term" value="F:rRNA binding"/>
    <property type="evidence" value="ECO:0007669"/>
    <property type="project" value="UniProtKB-UniRule"/>
</dbReference>
<dbReference type="GO" id="GO:0003735">
    <property type="term" value="F:structural constituent of ribosome"/>
    <property type="evidence" value="ECO:0007669"/>
    <property type="project" value="InterPro"/>
</dbReference>
<dbReference type="GO" id="GO:0016740">
    <property type="term" value="F:transferase activity"/>
    <property type="evidence" value="ECO:0007669"/>
    <property type="project" value="InterPro"/>
</dbReference>
<dbReference type="GO" id="GO:0002181">
    <property type="term" value="P:cytoplasmic translation"/>
    <property type="evidence" value="ECO:0007669"/>
    <property type="project" value="TreeGrafter"/>
</dbReference>
<dbReference type="FunFam" id="2.30.30.30:FF:000001">
    <property type="entry name" value="50S ribosomal protein L2"/>
    <property type="match status" value="1"/>
</dbReference>
<dbReference type="FunFam" id="2.40.50.140:FF:000003">
    <property type="entry name" value="50S ribosomal protein L2"/>
    <property type="match status" value="1"/>
</dbReference>
<dbReference type="FunFam" id="4.10.950.10:FF:000001">
    <property type="entry name" value="50S ribosomal protein L2"/>
    <property type="match status" value="1"/>
</dbReference>
<dbReference type="Gene3D" id="2.30.30.30">
    <property type="match status" value="1"/>
</dbReference>
<dbReference type="Gene3D" id="2.40.50.140">
    <property type="entry name" value="Nucleic acid-binding proteins"/>
    <property type="match status" value="1"/>
</dbReference>
<dbReference type="Gene3D" id="4.10.950.10">
    <property type="entry name" value="Ribosomal protein L2, domain 3"/>
    <property type="match status" value="1"/>
</dbReference>
<dbReference type="HAMAP" id="MF_01320_B">
    <property type="entry name" value="Ribosomal_uL2_B"/>
    <property type="match status" value="1"/>
</dbReference>
<dbReference type="InterPro" id="IPR012340">
    <property type="entry name" value="NA-bd_OB-fold"/>
</dbReference>
<dbReference type="InterPro" id="IPR014722">
    <property type="entry name" value="Rib_uL2_dom2"/>
</dbReference>
<dbReference type="InterPro" id="IPR002171">
    <property type="entry name" value="Ribosomal_uL2"/>
</dbReference>
<dbReference type="InterPro" id="IPR005880">
    <property type="entry name" value="Ribosomal_uL2_bac/org-type"/>
</dbReference>
<dbReference type="InterPro" id="IPR022669">
    <property type="entry name" value="Ribosomal_uL2_C"/>
</dbReference>
<dbReference type="InterPro" id="IPR022671">
    <property type="entry name" value="Ribosomal_uL2_CS"/>
</dbReference>
<dbReference type="InterPro" id="IPR014726">
    <property type="entry name" value="Ribosomal_uL2_dom3"/>
</dbReference>
<dbReference type="InterPro" id="IPR022666">
    <property type="entry name" value="Ribosomal_uL2_RNA-bd_dom"/>
</dbReference>
<dbReference type="InterPro" id="IPR008991">
    <property type="entry name" value="Translation_prot_SH3-like_sf"/>
</dbReference>
<dbReference type="NCBIfam" id="TIGR01171">
    <property type="entry name" value="rplB_bact"/>
    <property type="match status" value="1"/>
</dbReference>
<dbReference type="PANTHER" id="PTHR13691:SF5">
    <property type="entry name" value="LARGE RIBOSOMAL SUBUNIT PROTEIN UL2M"/>
    <property type="match status" value="1"/>
</dbReference>
<dbReference type="PANTHER" id="PTHR13691">
    <property type="entry name" value="RIBOSOMAL PROTEIN L2"/>
    <property type="match status" value="1"/>
</dbReference>
<dbReference type="Pfam" id="PF00181">
    <property type="entry name" value="Ribosomal_L2"/>
    <property type="match status" value="1"/>
</dbReference>
<dbReference type="Pfam" id="PF03947">
    <property type="entry name" value="Ribosomal_L2_C"/>
    <property type="match status" value="1"/>
</dbReference>
<dbReference type="PIRSF" id="PIRSF002158">
    <property type="entry name" value="Ribosomal_L2"/>
    <property type="match status" value="1"/>
</dbReference>
<dbReference type="SMART" id="SM01383">
    <property type="entry name" value="Ribosomal_L2"/>
    <property type="match status" value="1"/>
</dbReference>
<dbReference type="SMART" id="SM01382">
    <property type="entry name" value="Ribosomal_L2_C"/>
    <property type="match status" value="1"/>
</dbReference>
<dbReference type="SUPFAM" id="SSF50249">
    <property type="entry name" value="Nucleic acid-binding proteins"/>
    <property type="match status" value="1"/>
</dbReference>
<dbReference type="SUPFAM" id="SSF50104">
    <property type="entry name" value="Translation proteins SH3-like domain"/>
    <property type="match status" value="1"/>
</dbReference>
<dbReference type="PROSITE" id="PS00467">
    <property type="entry name" value="RIBOSOMAL_L2"/>
    <property type="match status" value="1"/>
</dbReference>